<reference key="1">
    <citation type="journal article" date="2006" name="J. Bacteriol.">
        <title>Complete genome sequence of the dehalorespiring bacterium Desulfitobacterium hafniense Y51 and comparison with Dehalococcoides ethenogenes 195.</title>
        <authorList>
            <person name="Nonaka H."/>
            <person name="Keresztes G."/>
            <person name="Shinoda Y."/>
            <person name="Ikenaga Y."/>
            <person name="Abe M."/>
            <person name="Naito K."/>
            <person name="Inatomi K."/>
            <person name="Furukawa K."/>
            <person name="Inui M."/>
            <person name="Yukawa H."/>
        </authorList>
    </citation>
    <scope>NUCLEOTIDE SEQUENCE [LARGE SCALE GENOMIC DNA]</scope>
    <source>
        <strain>Y51</strain>
    </source>
</reference>
<dbReference type="EC" id="3.4.23.36" evidence="1"/>
<dbReference type="EMBL" id="AP008230">
    <property type="protein sequence ID" value="BAE84655.1"/>
    <property type="molecule type" value="Genomic_DNA"/>
</dbReference>
<dbReference type="RefSeq" id="WP_011460664.1">
    <property type="nucleotide sequence ID" value="NC_007907.1"/>
</dbReference>
<dbReference type="SMR" id="Q24TI7"/>
<dbReference type="STRING" id="138119.DSY2866"/>
<dbReference type="KEGG" id="dsy:DSY2866"/>
<dbReference type="eggNOG" id="COG0597">
    <property type="taxonomic scope" value="Bacteria"/>
</dbReference>
<dbReference type="HOGENOM" id="CLU_083252_3_4_9"/>
<dbReference type="UniPathway" id="UPA00665"/>
<dbReference type="Proteomes" id="UP000001946">
    <property type="component" value="Chromosome"/>
</dbReference>
<dbReference type="GO" id="GO:0005886">
    <property type="term" value="C:plasma membrane"/>
    <property type="evidence" value="ECO:0007669"/>
    <property type="project" value="UniProtKB-SubCell"/>
</dbReference>
<dbReference type="GO" id="GO:0004190">
    <property type="term" value="F:aspartic-type endopeptidase activity"/>
    <property type="evidence" value="ECO:0007669"/>
    <property type="project" value="UniProtKB-UniRule"/>
</dbReference>
<dbReference type="GO" id="GO:0006508">
    <property type="term" value="P:proteolysis"/>
    <property type="evidence" value="ECO:0007669"/>
    <property type="project" value="UniProtKB-KW"/>
</dbReference>
<dbReference type="HAMAP" id="MF_00161">
    <property type="entry name" value="LspA"/>
    <property type="match status" value="1"/>
</dbReference>
<dbReference type="InterPro" id="IPR001872">
    <property type="entry name" value="Peptidase_A8"/>
</dbReference>
<dbReference type="NCBIfam" id="TIGR00077">
    <property type="entry name" value="lspA"/>
    <property type="match status" value="1"/>
</dbReference>
<dbReference type="PANTHER" id="PTHR33695">
    <property type="entry name" value="LIPOPROTEIN SIGNAL PEPTIDASE"/>
    <property type="match status" value="1"/>
</dbReference>
<dbReference type="PANTHER" id="PTHR33695:SF1">
    <property type="entry name" value="LIPOPROTEIN SIGNAL PEPTIDASE"/>
    <property type="match status" value="1"/>
</dbReference>
<dbReference type="Pfam" id="PF01252">
    <property type="entry name" value="Peptidase_A8"/>
    <property type="match status" value="1"/>
</dbReference>
<dbReference type="PRINTS" id="PR00781">
    <property type="entry name" value="LIPOSIGPTASE"/>
</dbReference>
<dbReference type="PROSITE" id="PS00855">
    <property type="entry name" value="SPASE_II"/>
    <property type="match status" value="1"/>
</dbReference>
<accession>Q24TI7</accession>
<evidence type="ECO:0000255" key="1">
    <source>
        <dbReference type="HAMAP-Rule" id="MF_00161"/>
    </source>
</evidence>
<feature type="chain" id="PRO_1000076923" description="Lipoprotein signal peptidase">
    <location>
        <begin position="1"/>
        <end position="151"/>
    </location>
</feature>
<feature type="transmembrane region" description="Helical" evidence="1">
    <location>
        <begin position="33"/>
        <end position="53"/>
    </location>
</feature>
<feature type="transmembrane region" description="Helical" evidence="1">
    <location>
        <begin position="58"/>
        <end position="78"/>
    </location>
</feature>
<feature type="transmembrane region" description="Helical" evidence="1">
    <location>
        <begin position="87"/>
        <end position="107"/>
    </location>
</feature>
<feature type="transmembrane region" description="Helical" evidence="1">
    <location>
        <begin position="120"/>
        <end position="140"/>
    </location>
</feature>
<feature type="active site" evidence="1">
    <location>
        <position position="111"/>
    </location>
</feature>
<feature type="active site" evidence="1">
    <location>
        <position position="126"/>
    </location>
</feature>
<comment type="function">
    <text evidence="1">This protein specifically catalyzes the removal of signal peptides from prolipoproteins.</text>
</comment>
<comment type="catalytic activity">
    <reaction evidence="1">
        <text>Release of signal peptides from bacterial membrane prolipoproteins. Hydrolyzes -Xaa-Yaa-Zaa-|-(S,diacylglyceryl)Cys-, in which Xaa is hydrophobic (preferably Leu), and Yaa (Ala or Ser) and Zaa (Gly or Ala) have small, neutral side chains.</text>
        <dbReference type="EC" id="3.4.23.36"/>
    </reaction>
</comment>
<comment type="pathway">
    <text evidence="1">Protein modification; lipoprotein biosynthesis (signal peptide cleavage).</text>
</comment>
<comment type="subcellular location">
    <subcellularLocation>
        <location evidence="1">Cell membrane</location>
        <topology evidence="1">Multi-pass membrane protein</topology>
    </subcellularLocation>
</comment>
<comment type="similarity">
    <text evidence="1">Belongs to the peptidase A8 family.</text>
</comment>
<name>LSPA_DESHY</name>
<sequence>MLIWITIGIVWAIDRVLKVLIQGNFVVGESVPVIPDFFHLTYVLNPGAAFGLLPGRTWIFIPAAIIVCAGIIYAQFKIPRQEWLMRLTLGLIGGGALGNLYDRLFIGKVVDYLDFQIWPFVFNFADSAIVVGVGLLMILMLLEDRKERKTE</sequence>
<keyword id="KW-0064">Aspartyl protease</keyword>
<keyword id="KW-1003">Cell membrane</keyword>
<keyword id="KW-0378">Hydrolase</keyword>
<keyword id="KW-0472">Membrane</keyword>
<keyword id="KW-0645">Protease</keyword>
<keyword id="KW-1185">Reference proteome</keyword>
<keyword id="KW-0812">Transmembrane</keyword>
<keyword id="KW-1133">Transmembrane helix</keyword>
<gene>
    <name evidence="1" type="primary">lspA</name>
    <name type="ordered locus">DSY2866</name>
</gene>
<protein>
    <recommendedName>
        <fullName evidence="1">Lipoprotein signal peptidase</fullName>
        <ecNumber evidence="1">3.4.23.36</ecNumber>
    </recommendedName>
    <alternativeName>
        <fullName evidence="1">Prolipoprotein signal peptidase</fullName>
    </alternativeName>
    <alternativeName>
        <fullName evidence="1">Signal peptidase II</fullName>
        <shortName evidence="1">SPase II</shortName>
    </alternativeName>
</protein>
<proteinExistence type="inferred from homology"/>
<organism>
    <name type="scientific">Desulfitobacterium hafniense (strain Y51)</name>
    <dbReference type="NCBI Taxonomy" id="138119"/>
    <lineage>
        <taxon>Bacteria</taxon>
        <taxon>Bacillati</taxon>
        <taxon>Bacillota</taxon>
        <taxon>Clostridia</taxon>
        <taxon>Eubacteriales</taxon>
        <taxon>Desulfitobacteriaceae</taxon>
        <taxon>Desulfitobacterium</taxon>
    </lineage>
</organism>